<dbReference type="EMBL" id="LZPO01117068">
    <property type="protein sequence ID" value="OBS57519.1"/>
    <property type="molecule type" value="Genomic_DNA"/>
</dbReference>
<dbReference type="SMR" id="A0A1A6FVC0"/>
<dbReference type="STRING" id="56216.A0A1A6FVC0"/>
<dbReference type="OrthoDB" id="8941712at2759"/>
<dbReference type="Proteomes" id="UP000092124">
    <property type="component" value="Unassembled WGS sequence"/>
</dbReference>
<dbReference type="GO" id="GO:0034364">
    <property type="term" value="C:high-density lipoprotein particle"/>
    <property type="evidence" value="ECO:0007669"/>
    <property type="project" value="TreeGrafter"/>
</dbReference>
<dbReference type="GO" id="GO:0034361">
    <property type="term" value="C:very-low-density lipoprotein particle"/>
    <property type="evidence" value="ECO:0007669"/>
    <property type="project" value="UniProtKB-KW"/>
</dbReference>
<dbReference type="GO" id="GO:0005504">
    <property type="term" value="F:fatty acid binding"/>
    <property type="evidence" value="ECO:0007669"/>
    <property type="project" value="TreeGrafter"/>
</dbReference>
<dbReference type="GO" id="GO:0004859">
    <property type="term" value="F:phospholipase inhibitor activity"/>
    <property type="evidence" value="ECO:0007669"/>
    <property type="project" value="TreeGrafter"/>
</dbReference>
<dbReference type="GO" id="GO:0006869">
    <property type="term" value="P:lipid transport"/>
    <property type="evidence" value="ECO:0007669"/>
    <property type="project" value="UniProtKB-KW"/>
</dbReference>
<dbReference type="GO" id="GO:0042157">
    <property type="term" value="P:lipoprotein metabolic process"/>
    <property type="evidence" value="ECO:0007669"/>
    <property type="project" value="InterPro"/>
</dbReference>
<dbReference type="GO" id="GO:0032375">
    <property type="term" value="P:negative regulation of cholesterol transport"/>
    <property type="evidence" value="ECO:0007669"/>
    <property type="project" value="TreeGrafter"/>
</dbReference>
<dbReference type="GO" id="GO:0050995">
    <property type="term" value="P:negative regulation of lipid catabolic process"/>
    <property type="evidence" value="ECO:0007669"/>
    <property type="project" value="TreeGrafter"/>
</dbReference>
<dbReference type="GO" id="GO:0010916">
    <property type="term" value="P:negative regulation of very-low-density lipoprotein particle clearance"/>
    <property type="evidence" value="ECO:0007669"/>
    <property type="project" value="TreeGrafter"/>
</dbReference>
<dbReference type="GO" id="GO:0006641">
    <property type="term" value="P:triglyceride metabolic process"/>
    <property type="evidence" value="ECO:0007669"/>
    <property type="project" value="TreeGrafter"/>
</dbReference>
<dbReference type="GO" id="GO:0034447">
    <property type="term" value="P:very-low-density lipoprotein particle clearance"/>
    <property type="evidence" value="ECO:0007669"/>
    <property type="project" value="TreeGrafter"/>
</dbReference>
<dbReference type="Gene3D" id="4.10.260.30">
    <property type="entry name" value="Apolipoprotein C-I"/>
    <property type="match status" value="1"/>
</dbReference>
<dbReference type="InterPro" id="IPR043081">
    <property type="entry name" value="ApoC-1_sf"/>
</dbReference>
<dbReference type="InterPro" id="IPR006781">
    <property type="entry name" value="ApoC-I"/>
</dbReference>
<dbReference type="PANTHER" id="PTHR16565">
    <property type="entry name" value="APOLIPOPROTEIN C-I"/>
    <property type="match status" value="1"/>
</dbReference>
<dbReference type="PANTHER" id="PTHR16565:SF2">
    <property type="entry name" value="APOLIPOPROTEIN C-I"/>
    <property type="match status" value="1"/>
</dbReference>
<dbReference type="Pfam" id="PF04691">
    <property type="entry name" value="ApoC-I"/>
    <property type="match status" value="1"/>
</dbReference>
<proteinExistence type="inferred from homology"/>
<reference key="1">
    <citation type="journal article" date="2016" name="Genom Data">
        <title>The draft genome sequence and annotation of the desert woodrat Neotoma lepida.</title>
        <authorList>
            <person name="Campbell M."/>
            <person name="Oakeson K.F."/>
            <person name="Yandell M."/>
            <person name="Halpert J.R."/>
            <person name="Dearing D."/>
        </authorList>
    </citation>
    <scope>NUCLEOTIDE SEQUENCE [LARGE SCALE GENOMIC DNA]</scope>
</reference>
<comment type="function">
    <text evidence="1 2 3">Inhibitor of lipoprotein binding to the low density lipoprotein (LDL) receptor, LDL receptor-related protein, and very low density lipoprotein (VLDL) receptor. Associates with high density lipoproteins (HDL) and the triacylglycerol-rich lipoproteins in the plasma and makes up about 10% of the protein of the VLDL and 2% of that of HDL. Appears to interfere directly with fatty acid uptake and is also the major plasma inhibitor of cholesteryl ester transfer protein (CETP). Modulates the interaction of APOE with beta-migrating VLDL and inhibits binding of beta-VLDL to the LDL receptor-related protein (By similarity). Binds free fatty acids and reduces their intracellular esterification (By similarity).</text>
</comment>
<comment type="subcellular location">
    <subcellularLocation>
        <location evidence="1">Secreted</location>
    </subcellularLocation>
</comment>
<comment type="similarity">
    <text evidence="6">Belongs to the apolipoprotein C1 family.</text>
</comment>
<evidence type="ECO:0000250" key="1">
    <source>
        <dbReference type="UniProtKB" id="P02654"/>
    </source>
</evidence>
<evidence type="ECO:0000250" key="2">
    <source>
        <dbReference type="UniProtKB" id="P33047"/>
    </source>
</evidence>
<evidence type="ECO:0000250" key="3">
    <source>
        <dbReference type="UniProtKB" id="P34928"/>
    </source>
</evidence>
<evidence type="ECO:0000250" key="4">
    <source>
        <dbReference type="UniProtKB" id="P86336"/>
    </source>
</evidence>
<evidence type="ECO:0000255" key="5"/>
<evidence type="ECO:0000305" key="6"/>
<feature type="signal peptide" evidence="5">
    <location>
        <begin position="1"/>
        <end position="26"/>
    </location>
</feature>
<feature type="chain" id="PRO_5008345086" description="Apolipoprotein C-I">
    <location>
        <begin position="27"/>
        <end position="88"/>
    </location>
</feature>
<feature type="chain" id="PRO_0000453990" description="Truncated apolipoprotein C-I" evidence="4">
    <location>
        <begin position="29"/>
        <end position="88"/>
    </location>
</feature>
<protein>
    <recommendedName>
        <fullName>Apolipoprotein C-I</fullName>
        <shortName>Apo-CI</shortName>
        <shortName>ApoC-I</shortName>
    </recommendedName>
    <alternativeName>
        <fullName>Apolipoprotein C1</fullName>
    </alternativeName>
    <component>
        <recommendedName>
            <fullName>Truncated apolipoprotein C-I</fullName>
        </recommendedName>
    </component>
</protein>
<organism>
    <name type="scientific">Neotoma lepida</name>
    <name type="common">Desert woodrat</name>
    <dbReference type="NCBI Taxonomy" id="56216"/>
    <lineage>
        <taxon>Eukaryota</taxon>
        <taxon>Metazoa</taxon>
        <taxon>Chordata</taxon>
        <taxon>Craniata</taxon>
        <taxon>Vertebrata</taxon>
        <taxon>Euteleostomi</taxon>
        <taxon>Mammalia</taxon>
        <taxon>Eutheria</taxon>
        <taxon>Euarchontoglires</taxon>
        <taxon>Glires</taxon>
        <taxon>Rodentia</taxon>
        <taxon>Myomorpha</taxon>
        <taxon>Muroidea</taxon>
        <taxon>Cricetidae</taxon>
        <taxon>Neotominae</taxon>
        <taxon>Neotoma</taxon>
    </lineage>
</organism>
<accession>A0A1A6FVC0</accession>
<keyword id="KW-0445">Lipid transport</keyword>
<keyword id="KW-1185">Reference proteome</keyword>
<keyword id="KW-0964">Secreted</keyword>
<keyword id="KW-0732">Signal</keyword>
<keyword id="KW-0813">Transport</keyword>
<keyword id="KW-0850">VLDL</keyword>
<name>APOC1_NEOLE</name>
<sequence length="88" mass="9853">MRLFISLPILIVVLAMALEGPAPAQATPDLASTFENLPDKLKEFGSALEDKTRAAIEHIKQKGILTKTRTWFSETFDKVKEKFKTTFA</sequence>
<gene>
    <name type="primary">Apoc1</name>
</gene>